<evidence type="ECO:0000255" key="1">
    <source>
        <dbReference type="HAMAP-Rule" id="MF_01343"/>
    </source>
</evidence>
<evidence type="ECO:0000256" key="2">
    <source>
        <dbReference type="SAM" id="MobiDB-lite"/>
    </source>
</evidence>
<evidence type="ECO:0000305" key="3"/>
<protein>
    <recommendedName>
        <fullName evidence="1">Small ribosomal subunit protein uS15</fullName>
    </recommendedName>
    <alternativeName>
        <fullName evidence="3">30S ribosomal protein S15</fullName>
    </alternativeName>
</protein>
<reference key="1">
    <citation type="journal article" date="2008" name="BMC Microbiol.">
        <title>Complete genome sequence of Treponema pallidum ssp. pallidum strain SS14 determined with oligonucleotide arrays.</title>
        <authorList>
            <person name="Matejkova P."/>
            <person name="Strouhal M."/>
            <person name="Smajs D."/>
            <person name="Norris S.J."/>
            <person name="Palzkill T."/>
            <person name="Petrosino J.F."/>
            <person name="Sodergren E."/>
            <person name="Norton J.E."/>
            <person name="Singh J."/>
            <person name="Richmond T.A."/>
            <person name="Molla M.N."/>
            <person name="Albert T.J."/>
            <person name="Weinstock G.M."/>
        </authorList>
    </citation>
    <scope>NUCLEOTIDE SEQUENCE [LARGE SCALE GENOMIC DNA]</scope>
    <source>
        <strain>SS14</strain>
    </source>
</reference>
<comment type="function">
    <text evidence="1">One of the primary rRNA binding proteins, it binds directly to 16S rRNA where it helps nucleate assembly of the platform of the 30S subunit by binding and bridging several RNA helices of the 16S rRNA.</text>
</comment>
<comment type="function">
    <text evidence="1">Forms an intersubunit bridge (bridge B4) with the 23S rRNA of the 50S subunit in the ribosome.</text>
</comment>
<comment type="subunit">
    <text evidence="1">Part of the 30S ribosomal subunit. Forms a bridge to the 50S subunit in the 70S ribosome, contacting the 23S rRNA.</text>
</comment>
<comment type="similarity">
    <text evidence="1">Belongs to the universal ribosomal protein uS15 family.</text>
</comment>
<dbReference type="EMBL" id="CP000805">
    <property type="protein sequence ID" value="ACD71303.1"/>
    <property type="molecule type" value="Genomic_DNA"/>
</dbReference>
<dbReference type="RefSeq" id="WP_010882330.1">
    <property type="nucleotide sequence ID" value="NC_021508.1"/>
</dbReference>
<dbReference type="SMR" id="B2S4C4"/>
<dbReference type="GeneID" id="93876641"/>
<dbReference type="KEGG" id="tpp:TPASS_0887"/>
<dbReference type="PATRIC" id="fig|455434.6.peg.874"/>
<dbReference type="Proteomes" id="UP000001202">
    <property type="component" value="Chromosome"/>
</dbReference>
<dbReference type="GO" id="GO:0022627">
    <property type="term" value="C:cytosolic small ribosomal subunit"/>
    <property type="evidence" value="ECO:0007669"/>
    <property type="project" value="TreeGrafter"/>
</dbReference>
<dbReference type="GO" id="GO:0019843">
    <property type="term" value="F:rRNA binding"/>
    <property type="evidence" value="ECO:0007669"/>
    <property type="project" value="UniProtKB-UniRule"/>
</dbReference>
<dbReference type="GO" id="GO:0003735">
    <property type="term" value="F:structural constituent of ribosome"/>
    <property type="evidence" value="ECO:0007669"/>
    <property type="project" value="InterPro"/>
</dbReference>
<dbReference type="GO" id="GO:0006412">
    <property type="term" value="P:translation"/>
    <property type="evidence" value="ECO:0007669"/>
    <property type="project" value="UniProtKB-UniRule"/>
</dbReference>
<dbReference type="CDD" id="cd00353">
    <property type="entry name" value="Ribosomal_S15p_S13e"/>
    <property type="match status" value="1"/>
</dbReference>
<dbReference type="FunFam" id="1.10.287.10:FF:000002">
    <property type="entry name" value="30S ribosomal protein S15"/>
    <property type="match status" value="1"/>
</dbReference>
<dbReference type="Gene3D" id="6.10.250.3130">
    <property type="match status" value="1"/>
</dbReference>
<dbReference type="Gene3D" id="1.10.287.10">
    <property type="entry name" value="S15/NS1, RNA-binding"/>
    <property type="match status" value="1"/>
</dbReference>
<dbReference type="HAMAP" id="MF_01343_B">
    <property type="entry name" value="Ribosomal_uS15_B"/>
    <property type="match status" value="1"/>
</dbReference>
<dbReference type="InterPro" id="IPR000589">
    <property type="entry name" value="Ribosomal_uS15"/>
</dbReference>
<dbReference type="InterPro" id="IPR005290">
    <property type="entry name" value="Ribosomal_uS15_bac-type"/>
</dbReference>
<dbReference type="InterPro" id="IPR009068">
    <property type="entry name" value="uS15_NS1_RNA-bd_sf"/>
</dbReference>
<dbReference type="NCBIfam" id="TIGR00952">
    <property type="entry name" value="S15_bact"/>
    <property type="match status" value="1"/>
</dbReference>
<dbReference type="PANTHER" id="PTHR23321">
    <property type="entry name" value="RIBOSOMAL PROTEIN S15, BACTERIAL AND ORGANELLAR"/>
    <property type="match status" value="1"/>
</dbReference>
<dbReference type="PANTHER" id="PTHR23321:SF26">
    <property type="entry name" value="SMALL RIBOSOMAL SUBUNIT PROTEIN US15M"/>
    <property type="match status" value="1"/>
</dbReference>
<dbReference type="Pfam" id="PF00312">
    <property type="entry name" value="Ribosomal_S15"/>
    <property type="match status" value="1"/>
</dbReference>
<dbReference type="SMART" id="SM01387">
    <property type="entry name" value="Ribosomal_S15"/>
    <property type="match status" value="1"/>
</dbReference>
<dbReference type="SUPFAM" id="SSF47060">
    <property type="entry name" value="S15/NS1 RNA-binding domain"/>
    <property type="match status" value="1"/>
</dbReference>
<sequence length="89" mass="10056">MALTKERTASVVQQYGSGEKDTGSSSVQIALLTERIRQLTDHCKVHPKDKSSNRGLLVLVGRRRRLLRYSRRVSMGAYRSLVKSLGLRK</sequence>
<proteinExistence type="inferred from homology"/>
<name>RS15_TREPS</name>
<accession>B2S4C4</accession>
<keyword id="KW-0687">Ribonucleoprotein</keyword>
<keyword id="KW-0689">Ribosomal protein</keyword>
<keyword id="KW-0694">RNA-binding</keyword>
<keyword id="KW-0699">rRNA-binding</keyword>
<gene>
    <name evidence="1" type="primary">rpsO</name>
    <name type="ordered locus">TPASS_0887</name>
</gene>
<feature type="chain" id="PRO_1000143187" description="Small ribosomal subunit protein uS15">
    <location>
        <begin position="1"/>
        <end position="89"/>
    </location>
</feature>
<feature type="region of interest" description="Disordered" evidence="2">
    <location>
        <begin position="1"/>
        <end position="23"/>
    </location>
</feature>
<organism>
    <name type="scientific">Treponema pallidum subsp. pallidum (strain SS14)</name>
    <dbReference type="NCBI Taxonomy" id="455434"/>
    <lineage>
        <taxon>Bacteria</taxon>
        <taxon>Pseudomonadati</taxon>
        <taxon>Spirochaetota</taxon>
        <taxon>Spirochaetia</taxon>
        <taxon>Spirochaetales</taxon>
        <taxon>Treponemataceae</taxon>
        <taxon>Treponema</taxon>
    </lineage>
</organism>